<name>CAER_PHAJA</name>
<accession>P86625</accession>
<dbReference type="GO" id="GO:0005576">
    <property type="term" value="C:extracellular region"/>
    <property type="evidence" value="ECO:0007669"/>
    <property type="project" value="UniProtKB-SubCell"/>
</dbReference>
<dbReference type="GO" id="GO:0006952">
    <property type="term" value="P:defense response"/>
    <property type="evidence" value="ECO:0007669"/>
    <property type="project" value="UniProtKB-KW"/>
</dbReference>
<dbReference type="GO" id="GO:0008217">
    <property type="term" value="P:regulation of blood pressure"/>
    <property type="evidence" value="ECO:0007669"/>
    <property type="project" value="UniProtKB-KW"/>
</dbReference>
<dbReference type="InterPro" id="IPR013152">
    <property type="entry name" value="Gastrin/cholecystokinin_CS"/>
</dbReference>
<dbReference type="PROSITE" id="PS00259">
    <property type="entry name" value="GASTRIN"/>
    <property type="match status" value="1"/>
</dbReference>
<evidence type="ECO:0000250" key="1">
    <source>
        <dbReference type="UniProtKB" id="Q7LZC4"/>
    </source>
</evidence>
<evidence type="ECO:0000255" key="2"/>
<evidence type="ECO:0000269" key="3">
    <source>
    </source>
</evidence>
<evidence type="ECO:0000303" key="4">
    <source>
    </source>
</evidence>
<evidence type="ECO:0000305" key="5"/>
<keyword id="KW-0027">Amidation</keyword>
<keyword id="KW-0878">Amphibian defense peptide</keyword>
<keyword id="KW-0903">Direct protein sequencing</keyword>
<keyword id="KW-0382">Hypotensive agent</keyword>
<keyword id="KW-0873">Pyrrolidone carboxylic acid</keyword>
<keyword id="KW-0964">Secreted</keyword>
<protein>
    <recommendedName>
        <fullName evidence="4">[Arg4]-Phyllocaerulein</fullName>
    </recommendedName>
</protein>
<sequence>QEYRGWMDF</sequence>
<organism>
    <name type="scientific">Phasmahyla jandaia</name>
    <name type="common">Jandaia leaf frog</name>
    <name type="synonym">Phyllomedusa jandaia</name>
    <dbReference type="NCBI Taxonomy" id="762504"/>
    <lineage>
        <taxon>Eukaryota</taxon>
        <taxon>Metazoa</taxon>
        <taxon>Chordata</taxon>
        <taxon>Craniata</taxon>
        <taxon>Vertebrata</taxon>
        <taxon>Euteleostomi</taxon>
        <taxon>Amphibia</taxon>
        <taxon>Batrachia</taxon>
        <taxon>Anura</taxon>
        <taxon>Neobatrachia</taxon>
        <taxon>Hyloidea</taxon>
        <taxon>Hylidae</taxon>
        <taxon>Phyllomedusinae</taxon>
        <taxon>Phasmahyla</taxon>
    </lineage>
</organism>
<reference evidence="5" key="1">
    <citation type="journal article" date="2011" name="Toxicon">
        <title>Peptidomic dissection of the skin secretion of Phasmahyla jandaia (Bokermann and Sazima, 1978) (Anura, Hylidae, Phyllomedusinae).</title>
        <authorList>
            <person name="Rates B."/>
            <person name="Silva L.P."/>
            <person name="Ireno I.C."/>
            <person name="Leite F.S."/>
            <person name="Borges M.H."/>
            <person name="Bloch C. Jr."/>
            <person name="De Lima M.E."/>
            <person name="Pimenta A.M."/>
        </authorList>
    </citation>
    <scope>PROTEIN SEQUENCE</scope>
    <scope>SUBCELLULAR LOCATION</scope>
    <scope>TISSUE SPECIFICITY</scope>
    <scope>MASS SPECTROMETRY</scope>
    <scope>AMIDATION AT PHE-9</scope>
    <scope>PYROGLUTAMATE FORMATION AT GLN-1</scope>
    <source>
        <tissue evidence="3">Skin secretion</tissue>
    </source>
</reference>
<comment type="function">
    <text evidence="1">Hypotensive neuropeptide.</text>
</comment>
<comment type="subcellular location">
    <subcellularLocation>
        <location evidence="3">Secreted</location>
    </subcellularLocation>
</comment>
<comment type="tissue specificity">
    <text evidence="3">Expressed by the skin glands.</text>
</comment>
<comment type="mass spectrometry"/>
<comment type="similarity">
    <text evidence="2">Belongs to the gastrin/cholecystokinin family.</text>
</comment>
<feature type="peptide" id="PRO_0000404636" description="[Arg4]-Phyllocaerulein" evidence="3">
    <location>
        <begin position="1"/>
        <end position="9"/>
    </location>
</feature>
<feature type="modified residue" description="Pyrrolidone carboxylic acid" evidence="3">
    <location>
        <position position="1"/>
    </location>
</feature>
<feature type="modified residue" description="Phenylalanine amide" evidence="3">
    <location>
        <position position="9"/>
    </location>
</feature>
<proteinExistence type="evidence at protein level"/>